<accession>C1KX53</accession>
<dbReference type="EC" id="4.3.3.6" evidence="1"/>
<dbReference type="EMBL" id="FM242711">
    <property type="protein sequence ID" value="CAS05882.1"/>
    <property type="molecule type" value="Genomic_DNA"/>
</dbReference>
<dbReference type="RefSeq" id="WP_003728355.1">
    <property type="nucleotide sequence ID" value="NC_012488.1"/>
</dbReference>
<dbReference type="SMR" id="C1KX53"/>
<dbReference type="GeneID" id="93240004"/>
<dbReference type="KEGG" id="lmc:Lm4b_02122"/>
<dbReference type="HOGENOM" id="CLU_055352_1_0_9"/>
<dbReference type="UniPathway" id="UPA00245"/>
<dbReference type="GO" id="GO:0036381">
    <property type="term" value="F:pyridoxal 5'-phosphate synthase (glutamine hydrolysing) activity"/>
    <property type="evidence" value="ECO:0007669"/>
    <property type="project" value="UniProtKB-UniRule"/>
</dbReference>
<dbReference type="GO" id="GO:0006520">
    <property type="term" value="P:amino acid metabolic process"/>
    <property type="evidence" value="ECO:0007669"/>
    <property type="project" value="TreeGrafter"/>
</dbReference>
<dbReference type="GO" id="GO:0042823">
    <property type="term" value="P:pyridoxal phosphate biosynthetic process"/>
    <property type="evidence" value="ECO:0007669"/>
    <property type="project" value="UniProtKB-UniRule"/>
</dbReference>
<dbReference type="GO" id="GO:0008615">
    <property type="term" value="P:pyridoxine biosynthetic process"/>
    <property type="evidence" value="ECO:0007669"/>
    <property type="project" value="TreeGrafter"/>
</dbReference>
<dbReference type="CDD" id="cd04727">
    <property type="entry name" value="pdxS"/>
    <property type="match status" value="1"/>
</dbReference>
<dbReference type="FunFam" id="3.20.20.70:FF:000001">
    <property type="entry name" value="Pyridoxine biosynthesis protein PDX1"/>
    <property type="match status" value="1"/>
</dbReference>
<dbReference type="Gene3D" id="3.20.20.70">
    <property type="entry name" value="Aldolase class I"/>
    <property type="match status" value="1"/>
</dbReference>
<dbReference type="HAMAP" id="MF_01824">
    <property type="entry name" value="PdxS"/>
    <property type="match status" value="1"/>
</dbReference>
<dbReference type="InterPro" id="IPR013785">
    <property type="entry name" value="Aldolase_TIM"/>
</dbReference>
<dbReference type="InterPro" id="IPR001852">
    <property type="entry name" value="PdxS/SNZ"/>
</dbReference>
<dbReference type="InterPro" id="IPR033755">
    <property type="entry name" value="PdxS/SNZ_N"/>
</dbReference>
<dbReference type="InterPro" id="IPR011060">
    <property type="entry name" value="RibuloseP-bd_barrel"/>
</dbReference>
<dbReference type="NCBIfam" id="NF003215">
    <property type="entry name" value="PRK04180.1"/>
    <property type="match status" value="1"/>
</dbReference>
<dbReference type="NCBIfam" id="TIGR00343">
    <property type="entry name" value="pyridoxal 5'-phosphate synthase lyase subunit PdxS"/>
    <property type="match status" value="1"/>
</dbReference>
<dbReference type="PANTHER" id="PTHR31829">
    <property type="entry name" value="PYRIDOXAL 5'-PHOSPHATE SYNTHASE SUBUNIT SNZ1-RELATED"/>
    <property type="match status" value="1"/>
</dbReference>
<dbReference type="PANTHER" id="PTHR31829:SF0">
    <property type="entry name" value="PYRIDOXAL 5'-PHOSPHATE SYNTHASE SUBUNIT SNZ1-RELATED"/>
    <property type="match status" value="1"/>
</dbReference>
<dbReference type="Pfam" id="PF01680">
    <property type="entry name" value="SOR_SNZ"/>
    <property type="match status" value="1"/>
</dbReference>
<dbReference type="PIRSF" id="PIRSF029271">
    <property type="entry name" value="Pdx1"/>
    <property type="match status" value="1"/>
</dbReference>
<dbReference type="SUPFAM" id="SSF51366">
    <property type="entry name" value="Ribulose-phoshate binding barrel"/>
    <property type="match status" value="1"/>
</dbReference>
<dbReference type="PROSITE" id="PS01235">
    <property type="entry name" value="PDXS_SNZ_1"/>
    <property type="match status" value="1"/>
</dbReference>
<dbReference type="PROSITE" id="PS51129">
    <property type="entry name" value="PDXS_SNZ_2"/>
    <property type="match status" value="1"/>
</dbReference>
<sequence length="295" mass="31673">MEKKVGTDRVKRGMAQMQKGGVIMDVVNAEQAKIAEEAGAVAVMALERVPSDIRAAGGVARMADPRIVEEVMNAVSIPVMAKARIGHITEARVLEAMGVDYIDESEVLTPADDEFHLLKSDFTVPFVCGCRDIGEALRRIGEGAAMLRTKGEPGTGNIVEAVRHMRQVNGQIRQIAGMTDDELMVAAKNFGAPYELIKEIKTLGKLPVVNFAAGGVATPADAALMMELGADGVFVGSGIFKSDNPAKFASAIVQATTYYTDYELIGKLSKELGSPMKGIEMSRLNPEDRMQDRSI</sequence>
<comment type="function">
    <text evidence="1">Catalyzes the formation of pyridoxal 5'-phosphate from ribose 5-phosphate (RBP), glyceraldehyde 3-phosphate (G3P) and ammonia. The ammonia is provided by the PdxT subunit. Can also use ribulose 5-phosphate and dihydroxyacetone phosphate as substrates, resulting from enzyme-catalyzed isomerization of RBP and G3P, respectively.</text>
</comment>
<comment type="catalytic activity">
    <reaction evidence="1">
        <text>aldehydo-D-ribose 5-phosphate + D-glyceraldehyde 3-phosphate + L-glutamine = pyridoxal 5'-phosphate + L-glutamate + phosphate + 3 H2O + H(+)</text>
        <dbReference type="Rhea" id="RHEA:31507"/>
        <dbReference type="ChEBI" id="CHEBI:15377"/>
        <dbReference type="ChEBI" id="CHEBI:15378"/>
        <dbReference type="ChEBI" id="CHEBI:29985"/>
        <dbReference type="ChEBI" id="CHEBI:43474"/>
        <dbReference type="ChEBI" id="CHEBI:58273"/>
        <dbReference type="ChEBI" id="CHEBI:58359"/>
        <dbReference type="ChEBI" id="CHEBI:59776"/>
        <dbReference type="ChEBI" id="CHEBI:597326"/>
        <dbReference type="EC" id="4.3.3.6"/>
    </reaction>
</comment>
<comment type="pathway">
    <text evidence="1">Cofactor biosynthesis; pyridoxal 5'-phosphate biosynthesis.</text>
</comment>
<comment type="subunit">
    <text evidence="1">In the presence of PdxT, forms a dodecamer of heterodimers.</text>
</comment>
<comment type="similarity">
    <text evidence="1">Belongs to the PdxS/SNZ family.</text>
</comment>
<organism>
    <name type="scientific">Listeria monocytogenes serotype 4b (strain CLIP80459)</name>
    <dbReference type="NCBI Taxonomy" id="568819"/>
    <lineage>
        <taxon>Bacteria</taxon>
        <taxon>Bacillati</taxon>
        <taxon>Bacillota</taxon>
        <taxon>Bacilli</taxon>
        <taxon>Bacillales</taxon>
        <taxon>Listeriaceae</taxon>
        <taxon>Listeria</taxon>
    </lineage>
</organism>
<keyword id="KW-0456">Lyase</keyword>
<keyword id="KW-0663">Pyridoxal phosphate</keyword>
<keyword id="KW-0704">Schiff base</keyword>
<name>PDXS_LISMC</name>
<feature type="chain" id="PRO_1000216060" description="Pyridoxal 5'-phosphate synthase subunit PdxS">
    <location>
        <begin position="1"/>
        <end position="295"/>
    </location>
</feature>
<feature type="active site" description="Schiff-base intermediate with D-ribose 5-phosphate" evidence="1">
    <location>
        <position position="82"/>
    </location>
</feature>
<feature type="binding site" evidence="1">
    <location>
        <position position="25"/>
    </location>
    <ligand>
        <name>D-ribose 5-phosphate</name>
        <dbReference type="ChEBI" id="CHEBI:78346"/>
    </ligand>
</feature>
<feature type="binding site" evidence="1">
    <location>
        <position position="154"/>
    </location>
    <ligand>
        <name>D-ribose 5-phosphate</name>
        <dbReference type="ChEBI" id="CHEBI:78346"/>
    </ligand>
</feature>
<feature type="binding site" evidence="1">
    <location>
        <position position="166"/>
    </location>
    <ligand>
        <name>D-glyceraldehyde 3-phosphate</name>
        <dbReference type="ChEBI" id="CHEBI:59776"/>
    </ligand>
</feature>
<feature type="binding site" evidence="1">
    <location>
        <position position="215"/>
    </location>
    <ligand>
        <name>D-ribose 5-phosphate</name>
        <dbReference type="ChEBI" id="CHEBI:78346"/>
    </ligand>
</feature>
<feature type="binding site" evidence="1">
    <location>
        <begin position="236"/>
        <end position="237"/>
    </location>
    <ligand>
        <name>D-ribose 5-phosphate</name>
        <dbReference type="ChEBI" id="CHEBI:78346"/>
    </ligand>
</feature>
<proteinExistence type="inferred from homology"/>
<protein>
    <recommendedName>
        <fullName evidence="1">Pyridoxal 5'-phosphate synthase subunit PdxS</fullName>
        <shortName evidence="1">PLP synthase subunit PdxS</shortName>
        <ecNumber evidence="1">4.3.3.6</ecNumber>
    </recommendedName>
    <alternativeName>
        <fullName evidence="1">Pdx1</fullName>
    </alternativeName>
</protein>
<gene>
    <name evidence="1" type="primary">pdxS</name>
    <name type="ordered locus">Lm4b_02122</name>
</gene>
<evidence type="ECO:0000255" key="1">
    <source>
        <dbReference type="HAMAP-Rule" id="MF_01824"/>
    </source>
</evidence>
<reference key="1">
    <citation type="journal article" date="2012" name="BMC Genomics">
        <title>Comparative genomics and transcriptomics of lineages I, II, and III strains of Listeria monocytogenes.</title>
        <authorList>
            <person name="Hain T."/>
            <person name="Ghai R."/>
            <person name="Billion A."/>
            <person name="Kuenne C.T."/>
            <person name="Steinweg C."/>
            <person name="Izar B."/>
            <person name="Mohamed W."/>
            <person name="Mraheil M."/>
            <person name="Domann E."/>
            <person name="Schaffrath S."/>
            <person name="Karst U."/>
            <person name="Goesmann A."/>
            <person name="Oehm S."/>
            <person name="Puhler A."/>
            <person name="Merkl R."/>
            <person name="Vorwerk S."/>
            <person name="Glaser P."/>
            <person name="Garrido P."/>
            <person name="Rusniok C."/>
            <person name="Buchrieser C."/>
            <person name="Goebel W."/>
            <person name="Chakraborty T."/>
        </authorList>
    </citation>
    <scope>NUCLEOTIDE SEQUENCE [LARGE SCALE GENOMIC DNA]</scope>
    <source>
        <strain>CLIP80459</strain>
    </source>
</reference>